<evidence type="ECO:0000250" key="1"/>
<evidence type="ECO:0000256" key="2">
    <source>
        <dbReference type="SAM" id="MobiDB-lite"/>
    </source>
</evidence>
<evidence type="ECO:0000269" key="3">
    <source>
    </source>
</evidence>
<evidence type="ECO:0000269" key="4">
    <source>
    </source>
</evidence>
<evidence type="ECO:0000303" key="5">
    <source>
    </source>
</evidence>
<evidence type="ECO:0000305" key="6"/>
<evidence type="ECO:0007744" key="7">
    <source>
    </source>
</evidence>
<evidence type="ECO:0007744" key="8">
    <source>
    </source>
</evidence>
<evidence type="ECO:0007744" key="9">
    <source>
    </source>
</evidence>
<reference key="1">
    <citation type="journal article" date="1996" name="J. Biol. Chem.">
        <title>SMAP, an Smg GDS-associating protein having arm repeats and phosphorylated by src tyrosine kinase.</title>
        <authorList>
            <person name="Shimizu K."/>
            <person name="Kawabe H."/>
            <person name="Minami S."/>
            <person name="Honda T."/>
            <person name="Takaishi K."/>
            <person name="Shirataki H."/>
            <person name="Takai Y."/>
        </authorList>
    </citation>
    <scope>NUCLEOTIDE SEQUENCE [MRNA] (ISOFORM 1)</scope>
    <scope>INTERACTION WITH RAP1GDS1</scope>
    <scope>PHOSPHORYLATION</scope>
    <source>
        <tissue>Brain</tissue>
    </source>
</reference>
<reference key="2">
    <citation type="journal article" date="2004" name="Nat. Genet.">
        <title>Complete sequencing and characterization of 21,243 full-length human cDNAs.</title>
        <authorList>
            <person name="Ota T."/>
            <person name="Suzuki Y."/>
            <person name="Nishikawa T."/>
            <person name="Otsuki T."/>
            <person name="Sugiyama T."/>
            <person name="Irie R."/>
            <person name="Wakamatsu A."/>
            <person name="Hayashi K."/>
            <person name="Sato H."/>
            <person name="Nagai K."/>
            <person name="Kimura K."/>
            <person name="Makita H."/>
            <person name="Sekine M."/>
            <person name="Obayashi M."/>
            <person name="Nishi T."/>
            <person name="Shibahara T."/>
            <person name="Tanaka T."/>
            <person name="Ishii S."/>
            <person name="Yamamoto J."/>
            <person name="Saito K."/>
            <person name="Kawai Y."/>
            <person name="Isono Y."/>
            <person name="Nakamura Y."/>
            <person name="Nagahari K."/>
            <person name="Murakami K."/>
            <person name="Yasuda T."/>
            <person name="Iwayanagi T."/>
            <person name="Wagatsuma M."/>
            <person name="Shiratori A."/>
            <person name="Sudo H."/>
            <person name="Hosoiri T."/>
            <person name="Kaku Y."/>
            <person name="Kodaira H."/>
            <person name="Kondo H."/>
            <person name="Sugawara M."/>
            <person name="Takahashi M."/>
            <person name="Kanda K."/>
            <person name="Yokoi T."/>
            <person name="Furuya T."/>
            <person name="Kikkawa E."/>
            <person name="Omura Y."/>
            <person name="Abe K."/>
            <person name="Kamihara K."/>
            <person name="Katsuta N."/>
            <person name="Sato K."/>
            <person name="Tanikawa M."/>
            <person name="Yamazaki M."/>
            <person name="Ninomiya K."/>
            <person name="Ishibashi T."/>
            <person name="Yamashita H."/>
            <person name="Murakawa K."/>
            <person name="Fujimori K."/>
            <person name="Tanai H."/>
            <person name="Kimata M."/>
            <person name="Watanabe M."/>
            <person name="Hiraoka S."/>
            <person name="Chiba Y."/>
            <person name="Ishida S."/>
            <person name="Ono Y."/>
            <person name="Takiguchi S."/>
            <person name="Watanabe S."/>
            <person name="Yosida M."/>
            <person name="Hotuta T."/>
            <person name="Kusano J."/>
            <person name="Kanehori K."/>
            <person name="Takahashi-Fujii A."/>
            <person name="Hara H."/>
            <person name="Tanase T.-O."/>
            <person name="Nomura Y."/>
            <person name="Togiya S."/>
            <person name="Komai F."/>
            <person name="Hara R."/>
            <person name="Takeuchi K."/>
            <person name="Arita M."/>
            <person name="Imose N."/>
            <person name="Musashino K."/>
            <person name="Yuuki H."/>
            <person name="Oshima A."/>
            <person name="Sasaki N."/>
            <person name="Aotsuka S."/>
            <person name="Yoshikawa Y."/>
            <person name="Matsunawa H."/>
            <person name="Ichihara T."/>
            <person name="Shiohata N."/>
            <person name="Sano S."/>
            <person name="Moriya S."/>
            <person name="Momiyama H."/>
            <person name="Satoh N."/>
            <person name="Takami S."/>
            <person name="Terashima Y."/>
            <person name="Suzuki O."/>
            <person name="Nakagawa S."/>
            <person name="Senoh A."/>
            <person name="Mizoguchi H."/>
            <person name="Goto Y."/>
            <person name="Shimizu F."/>
            <person name="Wakebe H."/>
            <person name="Hishigaki H."/>
            <person name="Watanabe T."/>
            <person name="Sugiyama A."/>
            <person name="Takemoto M."/>
            <person name="Kawakami B."/>
            <person name="Yamazaki M."/>
            <person name="Watanabe K."/>
            <person name="Kumagai A."/>
            <person name="Itakura S."/>
            <person name="Fukuzumi Y."/>
            <person name="Fujimori Y."/>
            <person name="Komiyama M."/>
            <person name="Tashiro H."/>
            <person name="Tanigami A."/>
            <person name="Fujiwara T."/>
            <person name="Ono T."/>
            <person name="Yamada K."/>
            <person name="Fujii Y."/>
            <person name="Ozaki K."/>
            <person name="Hirao M."/>
            <person name="Ohmori Y."/>
            <person name="Kawabata A."/>
            <person name="Hikiji T."/>
            <person name="Kobatake N."/>
            <person name="Inagaki H."/>
            <person name="Ikema Y."/>
            <person name="Okamoto S."/>
            <person name="Okitani R."/>
            <person name="Kawakami T."/>
            <person name="Noguchi S."/>
            <person name="Itoh T."/>
            <person name="Shigeta K."/>
            <person name="Senba T."/>
            <person name="Matsumura K."/>
            <person name="Nakajima Y."/>
            <person name="Mizuno T."/>
            <person name="Morinaga M."/>
            <person name="Sasaki M."/>
            <person name="Togashi T."/>
            <person name="Oyama M."/>
            <person name="Hata H."/>
            <person name="Watanabe M."/>
            <person name="Komatsu T."/>
            <person name="Mizushima-Sugano J."/>
            <person name="Satoh T."/>
            <person name="Shirai Y."/>
            <person name="Takahashi Y."/>
            <person name="Nakagawa K."/>
            <person name="Okumura K."/>
            <person name="Nagase T."/>
            <person name="Nomura N."/>
            <person name="Kikuchi H."/>
            <person name="Masuho Y."/>
            <person name="Yamashita R."/>
            <person name="Nakai K."/>
            <person name="Yada T."/>
            <person name="Nakamura Y."/>
            <person name="Ohara O."/>
            <person name="Isogai T."/>
            <person name="Sugano S."/>
        </authorList>
    </citation>
    <scope>NUCLEOTIDE SEQUENCE [LARGE SCALE MRNA] (ISOFORMS 1; 2 AND 4)</scope>
    <source>
        <tissue>Brain</tissue>
        <tissue>Placenta</tissue>
        <tissue>Testis</tissue>
    </source>
</reference>
<reference key="3">
    <citation type="journal article" date="2006" name="Nature">
        <title>The DNA sequence and biological annotation of human chromosome 1.</title>
        <authorList>
            <person name="Gregory S.G."/>
            <person name="Barlow K.F."/>
            <person name="McLay K.E."/>
            <person name="Kaul R."/>
            <person name="Swarbreck D."/>
            <person name="Dunham A."/>
            <person name="Scott C.E."/>
            <person name="Howe K.L."/>
            <person name="Woodfine K."/>
            <person name="Spencer C.C.A."/>
            <person name="Jones M.C."/>
            <person name="Gillson C."/>
            <person name="Searle S."/>
            <person name="Zhou Y."/>
            <person name="Kokocinski F."/>
            <person name="McDonald L."/>
            <person name="Evans R."/>
            <person name="Phillips K."/>
            <person name="Atkinson A."/>
            <person name="Cooper R."/>
            <person name="Jones C."/>
            <person name="Hall R.E."/>
            <person name="Andrews T.D."/>
            <person name="Lloyd C."/>
            <person name="Ainscough R."/>
            <person name="Almeida J.P."/>
            <person name="Ambrose K.D."/>
            <person name="Anderson F."/>
            <person name="Andrew R.W."/>
            <person name="Ashwell R.I.S."/>
            <person name="Aubin K."/>
            <person name="Babbage A.K."/>
            <person name="Bagguley C.L."/>
            <person name="Bailey J."/>
            <person name="Beasley H."/>
            <person name="Bethel G."/>
            <person name="Bird C.P."/>
            <person name="Bray-Allen S."/>
            <person name="Brown J.Y."/>
            <person name="Brown A.J."/>
            <person name="Buckley D."/>
            <person name="Burton J."/>
            <person name="Bye J."/>
            <person name="Carder C."/>
            <person name="Chapman J.C."/>
            <person name="Clark S.Y."/>
            <person name="Clarke G."/>
            <person name="Clee C."/>
            <person name="Cobley V."/>
            <person name="Collier R.E."/>
            <person name="Corby N."/>
            <person name="Coville G.J."/>
            <person name="Davies J."/>
            <person name="Deadman R."/>
            <person name="Dunn M."/>
            <person name="Earthrowl M."/>
            <person name="Ellington A.G."/>
            <person name="Errington H."/>
            <person name="Frankish A."/>
            <person name="Frankland J."/>
            <person name="French L."/>
            <person name="Garner P."/>
            <person name="Garnett J."/>
            <person name="Gay L."/>
            <person name="Ghori M.R.J."/>
            <person name="Gibson R."/>
            <person name="Gilby L.M."/>
            <person name="Gillett W."/>
            <person name="Glithero R.J."/>
            <person name="Grafham D.V."/>
            <person name="Griffiths C."/>
            <person name="Griffiths-Jones S."/>
            <person name="Grocock R."/>
            <person name="Hammond S."/>
            <person name="Harrison E.S.I."/>
            <person name="Hart E."/>
            <person name="Haugen E."/>
            <person name="Heath P.D."/>
            <person name="Holmes S."/>
            <person name="Holt K."/>
            <person name="Howden P.J."/>
            <person name="Hunt A.R."/>
            <person name="Hunt S.E."/>
            <person name="Hunter G."/>
            <person name="Isherwood J."/>
            <person name="James R."/>
            <person name="Johnson C."/>
            <person name="Johnson D."/>
            <person name="Joy A."/>
            <person name="Kay M."/>
            <person name="Kershaw J.K."/>
            <person name="Kibukawa M."/>
            <person name="Kimberley A.M."/>
            <person name="King A."/>
            <person name="Knights A.J."/>
            <person name="Lad H."/>
            <person name="Laird G."/>
            <person name="Lawlor S."/>
            <person name="Leongamornlert D.A."/>
            <person name="Lloyd D.M."/>
            <person name="Loveland J."/>
            <person name="Lovell J."/>
            <person name="Lush M.J."/>
            <person name="Lyne R."/>
            <person name="Martin S."/>
            <person name="Mashreghi-Mohammadi M."/>
            <person name="Matthews L."/>
            <person name="Matthews N.S.W."/>
            <person name="McLaren S."/>
            <person name="Milne S."/>
            <person name="Mistry S."/>
            <person name="Moore M.J.F."/>
            <person name="Nickerson T."/>
            <person name="O'Dell C.N."/>
            <person name="Oliver K."/>
            <person name="Palmeiri A."/>
            <person name="Palmer S.A."/>
            <person name="Parker A."/>
            <person name="Patel D."/>
            <person name="Pearce A.V."/>
            <person name="Peck A.I."/>
            <person name="Pelan S."/>
            <person name="Phelps K."/>
            <person name="Phillimore B.J."/>
            <person name="Plumb R."/>
            <person name="Rajan J."/>
            <person name="Raymond C."/>
            <person name="Rouse G."/>
            <person name="Saenphimmachak C."/>
            <person name="Sehra H.K."/>
            <person name="Sheridan E."/>
            <person name="Shownkeen R."/>
            <person name="Sims S."/>
            <person name="Skuce C.D."/>
            <person name="Smith M."/>
            <person name="Steward C."/>
            <person name="Subramanian S."/>
            <person name="Sycamore N."/>
            <person name="Tracey A."/>
            <person name="Tromans A."/>
            <person name="Van Helmond Z."/>
            <person name="Wall M."/>
            <person name="Wallis J.M."/>
            <person name="White S."/>
            <person name="Whitehead S.L."/>
            <person name="Wilkinson J.E."/>
            <person name="Willey D.L."/>
            <person name="Williams H."/>
            <person name="Wilming L."/>
            <person name="Wray P.W."/>
            <person name="Wu Z."/>
            <person name="Coulson A."/>
            <person name="Vaudin M."/>
            <person name="Sulston J.E."/>
            <person name="Durbin R.M."/>
            <person name="Hubbard T."/>
            <person name="Wooster R."/>
            <person name="Dunham I."/>
            <person name="Carter N.P."/>
            <person name="McVean G."/>
            <person name="Ross M.T."/>
            <person name="Harrow J."/>
            <person name="Olson M.V."/>
            <person name="Beck S."/>
            <person name="Rogers J."/>
            <person name="Bentley D.R."/>
        </authorList>
    </citation>
    <scope>NUCLEOTIDE SEQUENCE [LARGE SCALE GENOMIC DNA]</scope>
</reference>
<reference key="4">
    <citation type="submission" date="2005-07" db="EMBL/GenBank/DDBJ databases">
        <authorList>
            <person name="Mural R.J."/>
            <person name="Istrail S."/>
            <person name="Sutton G.G."/>
            <person name="Florea L."/>
            <person name="Halpern A.L."/>
            <person name="Mobarry C.M."/>
            <person name="Lippert R."/>
            <person name="Walenz B."/>
            <person name="Shatkay H."/>
            <person name="Dew I."/>
            <person name="Miller J.R."/>
            <person name="Flanigan M.J."/>
            <person name="Edwards N.J."/>
            <person name="Bolanos R."/>
            <person name="Fasulo D."/>
            <person name="Halldorsson B.V."/>
            <person name="Hannenhalli S."/>
            <person name="Turner R."/>
            <person name="Yooseph S."/>
            <person name="Lu F."/>
            <person name="Nusskern D.R."/>
            <person name="Shue B.C."/>
            <person name="Zheng X.H."/>
            <person name="Zhong F."/>
            <person name="Delcher A.L."/>
            <person name="Huson D.H."/>
            <person name="Kravitz S.A."/>
            <person name="Mouchard L."/>
            <person name="Reinert K."/>
            <person name="Remington K.A."/>
            <person name="Clark A.G."/>
            <person name="Waterman M.S."/>
            <person name="Eichler E.E."/>
            <person name="Adams M.D."/>
            <person name="Hunkapiller M.W."/>
            <person name="Myers E.W."/>
            <person name="Venter J.C."/>
        </authorList>
    </citation>
    <scope>NUCLEOTIDE SEQUENCE [LARGE SCALE GENOMIC DNA]</scope>
</reference>
<reference key="5">
    <citation type="journal article" date="2004" name="Genome Res.">
        <title>The status, quality, and expansion of the NIH full-length cDNA project: the Mammalian Gene Collection (MGC).</title>
        <authorList>
            <consortium name="The MGC Project Team"/>
        </authorList>
    </citation>
    <scope>NUCLEOTIDE SEQUENCE [LARGE SCALE MRNA] (ISOFORM 1)</scope>
    <source>
        <tissue>Testis</tissue>
    </source>
</reference>
<reference key="6">
    <citation type="journal article" date="1998" name="J. Biol. Chem.">
        <title>Complex formation of SMAP/KAP3, a KIF3A/B ATPase motor-associated protein, with a human chromosome-associated polypeptide.</title>
        <authorList>
            <person name="Shimizu K."/>
            <person name="Shirataki H."/>
            <person name="Honda T."/>
            <person name="Minami S."/>
            <person name="Takai Y."/>
        </authorList>
    </citation>
    <scope>IDENTIFICATION IN A COMPLEX WITH SMC3 AND KIF3B</scope>
</reference>
<reference key="7">
    <citation type="journal article" date="2010" name="Sci. Signal.">
        <title>Quantitative phosphoproteomics reveals widespread full phosphorylation site occupancy during mitosis.</title>
        <authorList>
            <person name="Olsen J.V."/>
            <person name="Vermeulen M."/>
            <person name="Santamaria A."/>
            <person name="Kumar C."/>
            <person name="Miller M.L."/>
            <person name="Jensen L.J."/>
            <person name="Gnad F."/>
            <person name="Cox J."/>
            <person name="Jensen T.S."/>
            <person name="Nigg E.A."/>
            <person name="Brunak S."/>
            <person name="Mann M."/>
        </authorList>
    </citation>
    <scope>PHOSPHORYLATION [LARGE SCALE ANALYSIS] AT SER-60</scope>
    <scope>IDENTIFICATION BY MASS SPECTROMETRY [LARGE SCALE ANALYSIS]</scope>
    <source>
        <tissue>Cervix carcinoma</tissue>
    </source>
</reference>
<reference key="8">
    <citation type="journal article" date="2011" name="BMC Syst. Biol.">
        <title>Initial characterization of the human central proteome.</title>
        <authorList>
            <person name="Burkard T.R."/>
            <person name="Planyavsky M."/>
            <person name="Kaupe I."/>
            <person name="Breitwieser F.P."/>
            <person name="Buerckstuemmer T."/>
            <person name="Bennett K.L."/>
            <person name="Superti-Furga G."/>
            <person name="Colinge J."/>
        </authorList>
    </citation>
    <scope>IDENTIFICATION BY MASS SPECTROMETRY [LARGE SCALE ANALYSIS]</scope>
</reference>
<reference key="9">
    <citation type="journal article" date="2013" name="J. Proteome Res.">
        <title>Toward a comprehensive characterization of a human cancer cell phosphoproteome.</title>
        <authorList>
            <person name="Zhou H."/>
            <person name="Di Palma S."/>
            <person name="Preisinger C."/>
            <person name="Peng M."/>
            <person name="Polat A.N."/>
            <person name="Heck A.J."/>
            <person name="Mohammed S."/>
        </authorList>
    </citation>
    <scope>PHOSPHORYLATION [LARGE SCALE ANALYSIS] AT SER-60</scope>
    <scope>IDENTIFICATION BY MASS SPECTROMETRY [LARGE SCALE ANALYSIS]</scope>
    <source>
        <tissue>Cervix carcinoma</tissue>
        <tissue>Erythroleukemia</tissue>
    </source>
</reference>
<reference key="10">
    <citation type="journal article" date="2014" name="J. Proteomics">
        <title>An enzyme assisted RP-RPLC approach for in-depth analysis of human liver phosphoproteome.</title>
        <authorList>
            <person name="Bian Y."/>
            <person name="Song C."/>
            <person name="Cheng K."/>
            <person name="Dong M."/>
            <person name="Wang F."/>
            <person name="Huang J."/>
            <person name="Sun D."/>
            <person name="Wang L."/>
            <person name="Ye M."/>
            <person name="Zou H."/>
        </authorList>
    </citation>
    <scope>PHOSPHORYLATION [LARGE SCALE ANALYSIS] AT SER-60</scope>
    <scope>IDENTIFICATION BY MASS SPECTROMETRY [LARGE SCALE ANALYSIS]</scope>
    <source>
        <tissue>Liver</tissue>
    </source>
</reference>
<sequence length="792" mass="91205">MQGEDARYLKRKVKGGNIDVHPSEKALIVHYEVEATILGEMGDPMLGERKECQKIIRLKSLNANTDITSLARKVVEECKLIHPSKLNEVEQLLYYLQNRRDSLSGKEKKEKSSKPKDPPPFEGMEIDEVANINDMDEYIELLYEDIPDKVRGSALILQLARNPDNLEELLLNETALGALARVLREDWKQSVELATNIIYIFFCFSSFSQFHGLITHYKIGALCMNIIDHELKRHELWQEELSKKKKAVDEDPENQTLRKDYEKTFKKYQGLVVKQEQLLRVALYLLLNLAEDTRTELKMRNKNIVHMLVKALDRDNFELLILVVSFLKKLSIFMENKNDMVEMDIVEKLVKMIPCEHEDLLNITLRLLLNLSFDTGLRNKMVQVGLLPKLTALLGNDNYKQIAMCVLYHISMDDRFKSMFAYTDCIPQLMKMLFECSDERIDLELISFCINLAANKRNVQLICEGNGLKMLMKRALKFKDPLLMKMIRNISQHDGPTKNLFIDYVGDLAAQISNDEEEEFVIECLGTLANLTIPDLDWELVLKEYKLVPYLKDKLKPGAAEDDLVLEVVIMIGTVSMDDSCAALLAKSGIIPALIELLNAQQEDDEFVCQIIYVFYQMVFHQATRDVIIKETQAPAYLIDLMHDKNNEIRKVCDNTLDIIAEYDEEWAKKIQSEKFRWHNSQWLEMVESRQMDESEQYLYGDDRIEPYIHEGDILERPDLFYNSDGLIASEGAISPDFFNDYHLQNGDVVGQHSFPGSLGMDGFGQPVGILGRPATAYGFRPDEPYYYGYGS</sequence>
<protein>
    <recommendedName>
        <fullName>Kinesin-associated protein 3</fullName>
        <shortName>KAP-3</shortName>
        <shortName>KAP3</shortName>
    </recommendedName>
    <alternativeName>
        <fullName>Smg GDS-associated protein</fullName>
    </alternativeName>
</protein>
<proteinExistence type="evidence at protein level"/>
<accession>Q92845</accession>
<accession>B1AKU4</accession>
<accession>B1AKU5</accession>
<accession>B2RDL1</accession>
<accession>B7Z8A3</accession>
<accession>F5H591</accession>
<accession>Q8NHU7</accession>
<accession>Q9H416</accession>
<dbReference type="EMBL" id="U59919">
    <property type="protein sequence ID" value="AAC50788.1"/>
    <property type="molecule type" value="mRNA"/>
</dbReference>
<dbReference type="EMBL" id="AK297368">
    <property type="protein sequence ID" value="BAH12562.1"/>
    <property type="molecule type" value="mRNA"/>
</dbReference>
<dbReference type="EMBL" id="AK303052">
    <property type="protein sequence ID" value="BAH13889.1"/>
    <property type="molecule type" value="mRNA"/>
</dbReference>
<dbReference type="EMBL" id="AK315586">
    <property type="protein sequence ID" value="BAG37958.1"/>
    <property type="molecule type" value="mRNA"/>
</dbReference>
<dbReference type="EMBL" id="AL356475">
    <property type="status" value="NOT_ANNOTATED_CDS"/>
    <property type="molecule type" value="Genomic_DNA"/>
</dbReference>
<dbReference type="EMBL" id="AL121714">
    <property type="status" value="NOT_ANNOTATED_CDS"/>
    <property type="molecule type" value="Genomic_DNA"/>
</dbReference>
<dbReference type="EMBL" id="CH471067">
    <property type="protein sequence ID" value="EAW90872.1"/>
    <property type="molecule type" value="Genomic_DNA"/>
</dbReference>
<dbReference type="EMBL" id="CH471067">
    <property type="protein sequence ID" value="EAW90873.1"/>
    <property type="molecule type" value="Genomic_DNA"/>
</dbReference>
<dbReference type="EMBL" id="CH471067">
    <property type="protein sequence ID" value="EAW90871.1"/>
    <property type="molecule type" value="Genomic_DNA"/>
</dbReference>
<dbReference type="EMBL" id="BC028679">
    <property type="protein sequence ID" value="AAH28679.1"/>
    <property type="molecule type" value="mRNA"/>
</dbReference>
<dbReference type="CCDS" id="CCDS1288.1">
    <molecule id="Q92845-1"/>
</dbReference>
<dbReference type="CCDS" id="CCDS55659.1">
    <molecule id="Q92845-4"/>
</dbReference>
<dbReference type="CCDS" id="CCDS55660.1">
    <molecule id="Q92845-3"/>
</dbReference>
<dbReference type="CCDS" id="CCDS55661.1">
    <molecule id="Q92845-2"/>
</dbReference>
<dbReference type="RefSeq" id="NP_001191443.1">
    <molecule id="Q92845-4"/>
    <property type="nucleotide sequence ID" value="NM_001204514.2"/>
</dbReference>
<dbReference type="RefSeq" id="NP_001191445.1">
    <molecule id="Q92845-2"/>
    <property type="nucleotide sequence ID" value="NM_001204516.2"/>
</dbReference>
<dbReference type="RefSeq" id="NP_001191446.1">
    <molecule id="Q92845-3"/>
    <property type="nucleotide sequence ID" value="NM_001204517.2"/>
</dbReference>
<dbReference type="RefSeq" id="NP_055785.2">
    <molecule id="Q92845-1"/>
    <property type="nucleotide sequence ID" value="NM_014970.3"/>
</dbReference>
<dbReference type="SMR" id="Q92845"/>
<dbReference type="BioGRID" id="116582">
    <property type="interactions" value="106"/>
</dbReference>
<dbReference type="ComplexPortal" id="CPX-3200">
    <property type="entry name" value="KIF3 complex variant AC-KAP3"/>
</dbReference>
<dbReference type="ComplexPortal" id="CPX-3201">
    <property type="entry name" value="KIF3 complex variant AB-KAP3"/>
</dbReference>
<dbReference type="FunCoup" id="Q92845">
    <property type="interactions" value="998"/>
</dbReference>
<dbReference type="IntAct" id="Q92845">
    <property type="interactions" value="87"/>
</dbReference>
<dbReference type="MINT" id="Q92845"/>
<dbReference type="STRING" id="9606.ENSP00000354560"/>
<dbReference type="GlyGen" id="Q92845">
    <property type="glycosylation" value="1 site, 1 O-linked glycan (1 site)"/>
</dbReference>
<dbReference type="iPTMnet" id="Q92845"/>
<dbReference type="PhosphoSitePlus" id="Q92845"/>
<dbReference type="SwissPalm" id="Q92845"/>
<dbReference type="BioMuta" id="KIFAP3"/>
<dbReference type="DMDM" id="73920216"/>
<dbReference type="jPOST" id="Q92845"/>
<dbReference type="MassIVE" id="Q92845"/>
<dbReference type="PaxDb" id="9606-ENSP00000354560"/>
<dbReference type="PeptideAtlas" id="Q92845"/>
<dbReference type="ProteomicsDB" id="26809"/>
<dbReference type="ProteomicsDB" id="3111"/>
<dbReference type="ProteomicsDB" id="3112"/>
<dbReference type="ProteomicsDB" id="75540">
    <molecule id="Q92845-1"/>
</dbReference>
<dbReference type="Pumba" id="Q92845"/>
<dbReference type="Antibodypedia" id="20546">
    <property type="antibodies" value="181 antibodies from 26 providers"/>
</dbReference>
<dbReference type="DNASU" id="22920"/>
<dbReference type="Ensembl" id="ENST00000361580.7">
    <molecule id="Q92845-1"/>
    <property type="protein sequence ID" value="ENSP00000354560.2"/>
    <property type="gene ID" value="ENSG00000075945.13"/>
</dbReference>
<dbReference type="Ensembl" id="ENST00000367765.5">
    <molecule id="Q92845-3"/>
    <property type="protein sequence ID" value="ENSP00000356739.1"/>
    <property type="gene ID" value="ENSG00000075945.13"/>
</dbReference>
<dbReference type="Ensembl" id="ENST00000367767.5">
    <molecule id="Q92845-2"/>
    <property type="protein sequence ID" value="ENSP00000356741.1"/>
    <property type="gene ID" value="ENSG00000075945.13"/>
</dbReference>
<dbReference type="Ensembl" id="ENST00000538366.5">
    <molecule id="Q92845-4"/>
    <property type="protein sequence ID" value="ENSP00000444622.1"/>
    <property type="gene ID" value="ENSG00000075945.13"/>
</dbReference>
<dbReference type="GeneID" id="22920"/>
<dbReference type="KEGG" id="hsa:22920"/>
<dbReference type="MANE-Select" id="ENST00000361580.7">
    <property type="protein sequence ID" value="ENSP00000354560.2"/>
    <property type="RefSeq nucleotide sequence ID" value="NM_014970.4"/>
    <property type="RefSeq protein sequence ID" value="NP_055785.2"/>
</dbReference>
<dbReference type="UCSC" id="uc001ggv.4">
    <molecule id="Q92845-1"/>
    <property type="organism name" value="human"/>
</dbReference>
<dbReference type="AGR" id="HGNC:17060"/>
<dbReference type="CTD" id="22920"/>
<dbReference type="DisGeNET" id="22920"/>
<dbReference type="GeneCards" id="KIFAP3"/>
<dbReference type="HGNC" id="HGNC:17060">
    <property type="gene designation" value="KIFAP3"/>
</dbReference>
<dbReference type="HPA" id="ENSG00000075945">
    <property type="expression patterns" value="Low tissue specificity"/>
</dbReference>
<dbReference type="MIM" id="601836">
    <property type="type" value="gene"/>
</dbReference>
<dbReference type="neXtProt" id="NX_Q92845"/>
<dbReference type="OpenTargets" id="ENSG00000075945"/>
<dbReference type="PharmGKB" id="PA30111"/>
<dbReference type="VEuPathDB" id="HostDB:ENSG00000075945"/>
<dbReference type="eggNOG" id="KOG1222">
    <property type="taxonomic scope" value="Eukaryota"/>
</dbReference>
<dbReference type="GeneTree" id="ENSGT00390000003574"/>
<dbReference type="HOGENOM" id="CLU_009879_1_0_1"/>
<dbReference type="InParanoid" id="Q92845"/>
<dbReference type="OMA" id="MYELNIV"/>
<dbReference type="OrthoDB" id="10265679at2759"/>
<dbReference type="PAN-GO" id="Q92845">
    <property type="GO annotations" value="5 GO annotations based on evolutionary models"/>
</dbReference>
<dbReference type="PhylomeDB" id="Q92845"/>
<dbReference type="TreeFam" id="TF314964"/>
<dbReference type="PathwayCommons" id="Q92845"/>
<dbReference type="Reactome" id="R-HSA-1445148">
    <property type="pathway name" value="Translocation of SLC2A4 (GLUT4) to the plasma membrane"/>
</dbReference>
<dbReference type="Reactome" id="R-HSA-2132295">
    <property type="pathway name" value="MHC class II antigen presentation"/>
</dbReference>
<dbReference type="Reactome" id="R-HSA-5620924">
    <property type="pathway name" value="Intraflagellar transport"/>
</dbReference>
<dbReference type="Reactome" id="R-HSA-6811434">
    <property type="pathway name" value="COPI-dependent Golgi-to-ER retrograde traffic"/>
</dbReference>
<dbReference type="Reactome" id="R-HSA-983189">
    <property type="pathway name" value="Kinesins"/>
</dbReference>
<dbReference type="SignaLink" id="Q92845"/>
<dbReference type="BioGRID-ORCS" id="22920">
    <property type="hits" value="12 hits in 1160 CRISPR screens"/>
</dbReference>
<dbReference type="ChiTaRS" id="KIFAP3">
    <property type="organism name" value="human"/>
</dbReference>
<dbReference type="GeneWiki" id="KIFAP3"/>
<dbReference type="GenomeRNAi" id="22920"/>
<dbReference type="Pharos" id="Q92845">
    <property type="development level" value="Tbio"/>
</dbReference>
<dbReference type="PRO" id="PR:Q92845"/>
<dbReference type="Proteomes" id="UP000005640">
    <property type="component" value="Chromosome 1"/>
</dbReference>
<dbReference type="RNAct" id="Q92845">
    <property type="molecule type" value="protein"/>
</dbReference>
<dbReference type="Bgee" id="ENSG00000075945">
    <property type="expression patterns" value="Expressed in cortical plate and 199 other cell types or tissues"/>
</dbReference>
<dbReference type="GO" id="GO:0005930">
    <property type="term" value="C:axoneme"/>
    <property type="evidence" value="ECO:0000318"/>
    <property type="project" value="GO_Central"/>
</dbReference>
<dbReference type="GO" id="GO:0005813">
    <property type="term" value="C:centrosome"/>
    <property type="evidence" value="ECO:0000314"/>
    <property type="project" value="BHF-UCL"/>
</dbReference>
<dbReference type="GO" id="GO:0036064">
    <property type="term" value="C:ciliary basal body"/>
    <property type="evidence" value="ECO:0007669"/>
    <property type="project" value="Ensembl"/>
</dbReference>
<dbReference type="GO" id="GO:0097542">
    <property type="term" value="C:ciliary tip"/>
    <property type="evidence" value="ECO:0000304"/>
    <property type="project" value="Reactome"/>
</dbReference>
<dbReference type="GO" id="GO:0035869">
    <property type="term" value="C:ciliary transition zone"/>
    <property type="evidence" value="ECO:0000318"/>
    <property type="project" value="GO_Central"/>
</dbReference>
<dbReference type="GO" id="GO:0005929">
    <property type="term" value="C:cilium"/>
    <property type="evidence" value="ECO:0000304"/>
    <property type="project" value="Reactome"/>
</dbReference>
<dbReference type="GO" id="GO:0000794">
    <property type="term" value="C:condensed nuclear chromosome"/>
    <property type="evidence" value="ECO:0000314"/>
    <property type="project" value="BHF-UCL"/>
</dbReference>
<dbReference type="GO" id="GO:0005829">
    <property type="term" value="C:cytosol"/>
    <property type="evidence" value="ECO:0000304"/>
    <property type="project" value="Reactome"/>
</dbReference>
<dbReference type="GO" id="GO:0032839">
    <property type="term" value="C:dendrite cytoplasm"/>
    <property type="evidence" value="ECO:0007669"/>
    <property type="project" value="GOC"/>
</dbReference>
<dbReference type="GO" id="GO:0005783">
    <property type="term" value="C:endoplasmic reticulum"/>
    <property type="evidence" value="ECO:0000304"/>
    <property type="project" value="ProtInc"/>
</dbReference>
<dbReference type="GO" id="GO:0098978">
    <property type="term" value="C:glutamatergic synapse"/>
    <property type="evidence" value="ECO:0007669"/>
    <property type="project" value="Ensembl"/>
</dbReference>
<dbReference type="GO" id="GO:0005794">
    <property type="term" value="C:Golgi apparatus"/>
    <property type="evidence" value="ECO:0007669"/>
    <property type="project" value="Ensembl"/>
</dbReference>
<dbReference type="GO" id="GO:0016939">
    <property type="term" value="C:kinesin II complex"/>
    <property type="evidence" value="ECO:0000314"/>
    <property type="project" value="BHF-UCL"/>
</dbReference>
<dbReference type="GO" id="GO:0015630">
    <property type="term" value="C:microtubule cytoskeleton"/>
    <property type="evidence" value="ECO:0000314"/>
    <property type="project" value="BHF-UCL"/>
</dbReference>
<dbReference type="GO" id="GO:1990075">
    <property type="term" value="C:periciliary membrane compartment"/>
    <property type="evidence" value="ECO:0007669"/>
    <property type="project" value="Ensembl"/>
</dbReference>
<dbReference type="GO" id="GO:0032391">
    <property type="term" value="C:photoreceptor connecting cilium"/>
    <property type="evidence" value="ECO:0007669"/>
    <property type="project" value="Ensembl"/>
</dbReference>
<dbReference type="GO" id="GO:0001917">
    <property type="term" value="C:photoreceptor inner segment"/>
    <property type="evidence" value="ECO:0007669"/>
    <property type="project" value="Ensembl"/>
</dbReference>
<dbReference type="GO" id="GO:0001750">
    <property type="term" value="C:photoreceptor outer segment"/>
    <property type="evidence" value="ECO:0007669"/>
    <property type="project" value="Ensembl"/>
</dbReference>
<dbReference type="GO" id="GO:0098794">
    <property type="term" value="C:postsynapse"/>
    <property type="evidence" value="ECO:0007669"/>
    <property type="project" value="Ensembl"/>
</dbReference>
<dbReference type="GO" id="GO:0120170">
    <property type="term" value="F:intraciliary transport particle B binding"/>
    <property type="evidence" value="ECO:0007669"/>
    <property type="project" value="Ensembl"/>
</dbReference>
<dbReference type="GO" id="GO:0019894">
    <property type="term" value="F:kinesin binding"/>
    <property type="evidence" value="ECO:0000353"/>
    <property type="project" value="BHF-UCL"/>
</dbReference>
<dbReference type="GO" id="GO:0019903">
    <property type="term" value="F:protein phosphatase binding"/>
    <property type="evidence" value="ECO:0000353"/>
    <property type="project" value="BHF-UCL"/>
</dbReference>
<dbReference type="GO" id="GO:0098971">
    <property type="term" value="P:anterograde dendritic transport of neurotransmitter receptor complex"/>
    <property type="evidence" value="ECO:0007669"/>
    <property type="project" value="Ensembl"/>
</dbReference>
<dbReference type="GO" id="GO:0010659">
    <property type="term" value="P:cardiac muscle cell apoptotic process"/>
    <property type="evidence" value="ECO:0007669"/>
    <property type="project" value="Ensembl"/>
</dbReference>
<dbReference type="GO" id="GO:0044782">
    <property type="term" value="P:cilium organization"/>
    <property type="evidence" value="ECO:0000318"/>
    <property type="project" value="GO_Central"/>
</dbReference>
<dbReference type="GO" id="GO:0007018">
    <property type="term" value="P:microtubule-based movement"/>
    <property type="evidence" value="ECO:0000318"/>
    <property type="project" value="GO_Central"/>
</dbReference>
<dbReference type="GO" id="GO:0007017">
    <property type="term" value="P:microtubule-based process"/>
    <property type="evidence" value="ECO:0000250"/>
    <property type="project" value="UniProtKB"/>
</dbReference>
<dbReference type="GO" id="GO:0010667">
    <property type="term" value="P:negative regulation of cardiac muscle cell apoptotic process"/>
    <property type="evidence" value="ECO:0007669"/>
    <property type="project" value="Ensembl"/>
</dbReference>
<dbReference type="GO" id="GO:0007406">
    <property type="term" value="P:negative regulation of neuroblast proliferation"/>
    <property type="evidence" value="ECO:0007669"/>
    <property type="project" value="Ensembl"/>
</dbReference>
<dbReference type="GO" id="GO:0070244">
    <property type="term" value="P:negative regulation of thymocyte apoptotic process"/>
    <property type="evidence" value="ECO:0007669"/>
    <property type="project" value="Ensembl"/>
</dbReference>
<dbReference type="GO" id="GO:0007405">
    <property type="term" value="P:neuroblast proliferation"/>
    <property type="evidence" value="ECO:0007669"/>
    <property type="project" value="Ensembl"/>
</dbReference>
<dbReference type="GO" id="GO:0072383">
    <property type="term" value="P:plus-end-directed vesicle transport along microtubule"/>
    <property type="evidence" value="ECO:0000304"/>
    <property type="project" value="BHF-UCL"/>
</dbReference>
<dbReference type="GO" id="GO:0046587">
    <property type="term" value="P:positive regulation of calcium-dependent cell-cell adhesion"/>
    <property type="evidence" value="ECO:0007669"/>
    <property type="project" value="Ensembl"/>
</dbReference>
<dbReference type="GO" id="GO:0008104">
    <property type="term" value="P:protein localization"/>
    <property type="evidence" value="ECO:0007669"/>
    <property type="project" value="Ensembl"/>
</dbReference>
<dbReference type="GO" id="GO:0065003">
    <property type="term" value="P:protein-containing complex assembly"/>
    <property type="evidence" value="ECO:0000304"/>
    <property type="project" value="ProtInc"/>
</dbReference>
<dbReference type="GO" id="GO:0007165">
    <property type="term" value="P:signal transduction"/>
    <property type="evidence" value="ECO:0000304"/>
    <property type="project" value="ProtInc"/>
</dbReference>
<dbReference type="GO" id="GO:0070242">
    <property type="term" value="P:thymocyte apoptotic process"/>
    <property type="evidence" value="ECO:0007669"/>
    <property type="project" value="Ensembl"/>
</dbReference>
<dbReference type="Gene3D" id="1.25.10.10">
    <property type="entry name" value="Leucine-rich Repeat Variant"/>
    <property type="match status" value="1"/>
</dbReference>
<dbReference type="InterPro" id="IPR011989">
    <property type="entry name" value="ARM-like"/>
</dbReference>
<dbReference type="InterPro" id="IPR016024">
    <property type="entry name" value="ARM-type_fold"/>
</dbReference>
<dbReference type="InterPro" id="IPR000225">
    <property type="entry name" value="Armadillo"/>
</dbReference>
<dbReference type="InterPro" id="IPR008658">
    <property type="entry name" value="KAP3"/>
</dbReference>
<dbReference type="PANTHER" id="PTHR15605:SF2">
    <property type="entry name" value="KINESIN-ASSOCIATED PROTEIN 3"/>
    <property type="match status" value="1"/>
</dbReference>
<dbReference type="PANTHER" id="PTHR15605">
    <property type="entry name" value="KINESIN-ASSOCIATED PROTEINS"/>
    <property type="match status" value="1"/>
</dbReference>
<dbReference type="Pfam" id="PF05804">
    <property type="entry name" value="KAP"/>
    <property type="match status" value="1"/>
</dbReference>
<dbReference type="SMART" id="SM00185">
    <property type="entry name" value="ARM"/>
    <property type="match status" value="3"/>
</dbReference>
<dbReference type="SMART" id="SM01297">
    <property type="entry name" value="KAP"/>
    <property type="match status" value="1"/>
</dbReference>
<dbReference type="SUPFAM" id="SSF48371">
    <property type="entry name" value="ARM repeat"/>
    <property type="match status" value="1"/>
</dbReference>
<dbReference type="PROSITE" id="PS50176">
    <property type="entry name" value="ARM_REPEAT"/>
    <property type="match status" value="1"/>
</dbReference>
<feature type="chain" id="PRO_0000084302" description="Kinesin-associated protein 3">
    <location>
        <begin position="1"/>
        <end position="792"/>
    </location>
</feature>
<feature type="repeat" description="ARM 1">
    <location>
        <begin position="333"/>
        <end position="373"/>
    </location>
</feature>
<feature type="repeat" description="ARM 2">
    <location>
        <begin position="374"/>
        <end position="412"/>
    </location>
</feature>
<feature type="repeat" description="ARM 3">
    <location>
        <begin position="494"/>
        <end position="533"/>
    </location>
</feature>
<feature type="repeat" description="ARM 4">
    <location>
        <begin position="578"/>
        <end position="620"/>
    </location>
</feature>
<feature type="repeat" description="ARM 5">
    <location>
        <begin position="621"/>
        <end position="662"/>
    </location>
</feature>
<feature type="region of interest" description="Disordered" evidence="2">
    <location>
        <begin position="103"/>
        <end position="124"/>
    </location>
</feature>
<feature type="compositionally biased region" description="Basic and acidic residues" evidence="2">
    <location>
        <begin position="103"/>
        <end position="119"/>
    </location>
</feature>
<feature type="modified residue" description="Phosphoserine" evidence="7 8 9">
    <location>
        <position position="60"/>
    </location>
</feature>
<feature type="splice variant" id="VSP_047132" description="In isoform 4." evidence="5">
    <original>MQGEDARYLKRKVKGGNIDVHPSEKALIVHYEVEATILGEMGDPMLGERKECQKIIRLKSLNANTDITSLARKVVEECKLIHPSKLNEVEQLLYYLQNRRDSLSGK</original>
    <variation>MSIALGNTYRRSLSDSETVSVLQASLCE</variation>
    <location>
        <begin position="1"/>
        <end position="106"/>
    </location>
</feature>
<feature type="splice variant" id="VSP_047133" description="In isoform 3." evidence="6">
    <location>
        <begin position="1"/>
        <end position="40"/>
    </location>
</feature>
<feature type="splice variant" id="VSP_044505" description="In isoform 2." evidence="5">
    <original>RKVKGGNIDVHPSEKALIVHYEVEATILGEMGDPMLGERKECQKI</original>
    <variation>S</variation>
    <location>
        <begin position="11"/>
        <end position="55"/>
    </location>
</feature>
<feature type="sequence variant" id="VAR_051081" description="In dbSNP:rs12075833.">
    <original>S</original>
    <variation>A</variation>
    <location>
        <position position="513"/>
    </location>
</feature>
<feature type="sequence conflict" description="In Ref. 1; AAC50788." evidence="6" ref="1">
    <original>Q</original>
    <variation>L</variation>
    <location>
        <position position="91"/>
    </location>
</feature>
<feature type="sequence conflict" description="In Ref. 2; BAH13889." evidence="6" ref="2">
    <original>I</original>
    <variation>V</variation>
    <location>
        <position position="734"/>
    </location>
</feature>
<keyword id="KW-0025">Alternative splicing</keyword>
<keyword id="KW-0597">Phosphoprotein</keyword>
<keyword id="KW-1267">Proteomics identification</keyword>
<keyword id="KW-1185">Reference proteome</keyword>
<keyword id="KW-0677">Repeat</keyword>
<comment type="function">
    <text evidence="1">Involved in tethering the chromosomes to the spindle pole and in chromosome movement. Binds to the tail domain of the KIF3A/KIF3B heterodimer to form a heterotrimeric KIF3 complex and may regulate the membrane binding of this complex (By similarity).</text>
</comment>
<comment type="subunit">
    <text evidence="3 4">Heterotrimer of KIFAP3, KIF3A and KIF3B. Interacts with RAP1GDS1/SMG GDS. Interacts with SMC3 subunit of the cohesin complex.</text>
</comment>
<comment type="interaction">
    <interactant intactId="EBI-954040">
        <id>Q92845</id>
    </interactant>
    <interactant intactId="EBI-12061599">
        <id>Q9H6X5-2</id>
        <label>C19orf44</label>
    </interactant>
    <organismsDiffer>false</organismsDiffer>
    <experiments>3</experiments>
</comment>
<comment type="interaction">
    <interactant intactId="EBI-954040">
        <id>Q92845</id>
    </interactant>
    <interactant intactId="EBI-3893317">
        <id>P09067</id>
        <label>HOXB5</label>
    </interactant>
    <organismsDiffer>false</organismsDiffer>
    <experiments>3</experiments>
</comment>
<comment type="interaction">
    <interactant intactId="EBI-954040">
        <id>Q92845</id>
    </interactant>
    <interactant intactId="EBI-2556193">
        <id>Q63ZY3</id>
        <label>KANK2</label>
    </interactant>
    <organismsDiffer>false</organismsDiffer>
    <experiments>3</experiments>
</comment>
<comment type="interaction">
    <interactant intactId="EBI-954040">
        <id>Q92845</id>
    </interactant>
    <interactant intactId="EBI-1104844">
        <id>Q9Y496</id>
        <label>KIF3A</label>
    </interactant>
    <organismsDiffer>false</organismsDiffer>
    <experiments>11</experiments>
</comment>
<comment type="interaction">
    <interactant intactId="EBI-954040">
        <id>Q92845</id>
    </interactant>
    <interactant intactId="EBI-3931791">
        <id>O15066</id>
        <label>KIF3B</label>
    </interactant>
    <organismsDiffer>false</organismsDiffer>
    <experiments>10</experiments>
</comment>
<comment type="interaction">
    <interactant intactId="EBI-954040">
        <id>Q92845</id>
    </interactant>
    <interactant intactId="EBI-1757866">
        <id>P00540</id>
        <label>MOS</label>
    </interactant>
    <organismsDiffer>false</organismsDiffer>
    <experiments>3</experiments>
</comment>
<comment type="interaction">
    <interactant intactId="EBI-954040">
        <id>Q92845</id>
    </interactant>
    <interactant intactId="EBI-2858213">
        <id>Q86VE0</id>
        <label>MYPOP</label>
    </interactant>
    <organismsDiffer>false</organismsDiffer>
    <experiments>3</experiments>
</comment>
<comment type="interaction">
    <interactant intactId="EBI-954040">
        <id>Q92845</id>
    </interactant>
    <interactant intactId="EBI-747693">
        <id>P41227</id>
        <label>NAA10</label>
    </interactant>
    <organismsDiffer>false</organismsDiffer>
    <experiments>7</experiments>
</comment>
<comment type="interaction">
    <interactant intactId="EBI-954040">
        <id>Q92845</id>
    </interactant>
    <interactant intactId="EBI-2585120">
        <id>Q9BSU3</id>
        <label>NAA11</label>
    </interactant>
    <organismsDiffer>false</organismsDiffer>
    <experiments>3</experiments>
</comment>
<comment type="interaction">
    <interactant intactId="EBI-954040">
        <id>Q92845</id>
    </interactant>
    <interactant intactId="EBI-489611">
        <id>P19878</id>
        <label>NCF2</label>
    </interactant>
    <organismsDiffer>false</organismsDiffer>
    <experiments>14</experiments>
</comment>
<comment type="interaction">
    <interactant intactId="EBI-954040">
        <id>Q92845</id>
    </interactant>
    <interactant intactId="EBI-10217913">
        <id>Q14D33</id>
        <label>RTP5</label>
    </interactant>
    <organismsDiffer>false</organismsDiffer>
    <experiments>3</experiments>
</comment>
<comment type="alternative products">
    <event type="alternative splicing"/>
    <isoform>
        <id>Q92845-1</id>
        <name>1</name>
        <sequence type="displayed"/>
    </isoform>
    <isoform>
        <id>Q92845-2</id>
        <name>2</name>
        <sequence type="described" ref="VSP_044505"/>
    </isoform>
    <isoform>
        <id>Q92845-3</id>
        <name>3</name>
        <sequence type="described" ref="VSP_047133"/>
    </isoform>
    <isoform>
        <id>Q92845-4</id>
        <name>4</name>
        <sequence type="described" ref="VSP_047132"/>
    </isoform>
</comment>
<comment type="PTM">
    <text evidence="3">Phosphorylated on tyrosine residues by SRC in vitro; this reduces the binding affinity of the protein for RAP1GDS1.</text>
</comment>
<gene>
    <name type="primary">KIFAP3</name>
    <name type="synonym">KIF3AP</name>
    <name type="synonym">SMAP</name>
</gene>
<name>KIFA3_HUMAN</name>
<organism>
    <name type="scientific">Homo sapiens</name>
    <name type="common">Human</name>
    <dbReference type="NCBI Taxonomy" id="9606"/>
    <lineage>
        <taxon>Eukaryota</taxon>
        <taxon>Metazoa</taxon>
        <taxon>Chordata</taxon>
        <taxon>Craniata</taxon>
        <taxon>Vertebrata</taxon>
        <taxon>Euteleostomi</taxon>
        <taxon>Mammalia</taxon>
        <taxon>Eutheria</taxon>
        <taxon>Euarchontoglires</taxon>
        <taxon>Primates</taxon>
        <taxon>Haplorrhini</taxon>
        <taxon>Catarrhini</taxon>
        <taxon>Hominidae</taxon>
        <taxon>Homo</taxon>
    </lineage>
</organism>